<reference key="1">
    <citation type="journal article" date="1984" name="J. Gen. Virol.">
        <title>Complete nucleotide sequence of a satellite RNA of tomato black ring virus.</title>
        <authorList>
            <person name="Meyer M."/>
            <person name="Hemmer O."/>
            <person name="Fritsch C."/>
        </authorList>
    </citation>
    <scope>NUCLEOTIDE SEQUENCE [GENOMIC RNA]</scope>
</reference>
<accession>P22051</accession>
<organismHost>
    <name type="scientific">Allium porrum</name>
    <name type="common">Leek</name>
    <name type="synonym">Allium ampeloprasum var. porrum</name>
    <dbReference type="NCBI Taxonomy" id="4681"/>
</organismHost>
<organismHost>
    <name type="scientific">Apium graveolens</name>
    <name type="common">Celery</name>
    <dbReference type="NCBI Taxonomy" id="4045"/>
</organismHost>
<organismHost>
    <name type="scientific">Beta vulgaris</name>
    <name type="common">Sugar beet</name>
    <dbReference type="NCBI Taxonomy" id="161934"/>
</organismHost>
<organismHost>
    <name type="scientific">Fraxinus</name>
    <name type="common">ash trees</name>
    <dbReference type="NCBI Taxonomy" id="38871"/>
</organismHost>
<organismHost>
    <name type="scientific">Lactuca sativa</name>
    <name type="common">Garden lettuce</name>
    <dbReference type="NCBI Taxonomy" id="4236"/>
</organismHost>
<organismHost>
    <name type="scientific">Narcissus pseudonarcissus</name>
    <name type="common">Daffodil</name>
    <dbReference type="NCBI Taxonomy" id="39639"/>
</organismHost>
<organismHost>
    <name type="scientific">Phaseolus vulgaris</name>
    <name type="common">Kidney bean</name>
    <name type="synonym">French bean</name>
    <dbReference type="NCBI Taxonomy" id="3885"/>
</organismHost>
<organismHost>
    <name type="scientific">Robinia pseudoacacia</name>
    <name type="common">Black locust</name>
    <dbReference type="NCBI Taxonomy" id="35938"/>
</organismHost>
<organismHost>
    <name type="scientific">Rubus</name>
    <name type="common">bramble</name>
    <dbReference type="NCBI Taxonomy" id="23216"/>
</organismHost>
<organismHost>
    <name type="scientific">Solanum lycopersicum</name>
    <name type="common">Tomato</name>
    <name type="synonym">Lycopersicon esculentum</name>
    <dbReference type="NCBI Taxonomy" id="4081"/>
</organismHost>
<organismHost>
    <name type="scientific">Solanum tuberosum</name>
    <name type="common">Potato</name>
    <dbReference type="NCBI Taxonomy" id="4113"/>
</organismHost>
<organismHost>
    <name type="scientific">Tulipa</name>
    <dbReference type="NCBI Taxonomy" id="13305"/>
</organismHost>
<organismHost>
    <name type="scientific">Vitis</name>
    <dbReference type="NCBI Taxonomy" id="3603"/>
</organismHost>
<protein>
    <recommendedName>
        <fullName>Satellite RNA 48 kDa protein</fullName>
    </recommendedName>
</protein>
<comment type="similarity">
    <text evidence="2">Belongs to the nepovirus satellite RNA 48 kDa protein family.</text>
</comment>
<organism>
    <name type="scientific">Beet ringspot virus</name>
    <name type="common">BRSV</name>
    <name type="synonym">Tomato black ring virus (strain S)</name>
    <dbReference type="NCBI Taxonomy" id="191547"/>
    <lineage>
        <taxon>Viruses</taxon>
        <taxon>Riboviria</taxon>
        <taxon>Orthornavirae</taxon>
        <taxon>Pisuviricota</taxon>
        <taxon>Pisoniviricetes</taxon>
        <taxon>Picornavirales</taxon>
        <taxon>Secoviridae</taxon>
        <taxon>Comovirinae</taxon>
        <taxon>Nepovirus</taxon>
        <taxon>Nepovirus betae</taxon>
    </lineage>
</organism>
<dbReference type="EMBL" id="X00978">
    <property type="protein sequence ID" value="CAA25483.1"/>
    <property type="molecule type" value="Genomic_RNA"/>
</dbReference>
<dbReference type="Proteomes" id="UP000007615">
    <property type="component" value="Genome"/>
</dbReference>
<dbReference type="InterPro" id="IPR035312">
    <property type="entry name" value="SatRNA_48"/>
</dbReference>
<dbReference type="Pfam" id="PF17485">
    <property type="entry name" value="SatRNA_48"/>
    <property type="match status" value="1"/>
</dbReference>
<feature type="chain" id="PRO_0000105579" description="Satellite RNA 48 kDa protein">
    <location>
        <begin position="1"/>
        <end position="424"/>
    </location>
</feature>
<feature type="region of interest" description="Disordered" evidence="1">
    <location>
        <begin position="15"/>
        <end position="78"/>
    </location>
</feature>
<feature type="compositionally biased region" description="Polar residues" evidence="1">
    <location>
        <begin position="31"/>
        <end position="42"/>
    </location>
</feature>
<feature type="compositionally biased region" description="Polar residues" evidence="1">
    <location>
        <begin position="62"/>
        <end position="73"/>
    </location>
</feature>
<evidence type="ECO:0000256" key="1">
    <source>
        <dbReference type="SAM" id="MobiDB-lite"/>
    </source>
</evidence>
<evidence type="ECO:0000305" key="2"/>
<name>VS48_BRSV</name>
<sequence length="424" mass="47874">MKSYFCVTPSGWQETQTRPRIVPKHSEKCSRTYSRPRSSLSDSEGRCVVLPRDGGGRKRKSNGSQGRCSNNPGRPSRKWTEKTIAASRQGFFSKRDNGYWVPKSPEKKYVPKVFPRNMDNKKSFKDVLTSPAKIQIKPTPESILLAQKIQNSTFKSRGKVTLSQFSLPLINRFQEIQLTTHLEPVEESTPFGVNDQRAQHLFCKKVPRKIGRNTVLVCPITGTESHIDAKRGISARIVDSMASVVHTENLPAYERGHVVTKNVSRTKRVCTPVPIIGTFSDRAIRVECDDHTDELASASSVPSIWKPSKKQHAVPISSSNEMGSAVGTKPDWYTPVKTCTHRQYQKVQRVFLDAMNIMRTLRFHTGPQELRETWVKCWLQVHKKNVAFPGWMITPLLSGTVPCEQEFFLPKAGETRGFATVCYA</sequence>
<proteinExistence type="inferred from homology"/>